<accession>P06341</accession>
<gene>
    <name type="primary">RT1-B</name>
</gene>
<dbReference type="EMBL" id="M15358">
    <property type="protein sequence ID" value="AAA74477.1"/>
    <property type="molecule type" value="Genomic_DNA"/>
</dbReference>
<dbReference type="EMBL" id="M15354">
    <property type="protein sequence ID" value="AAA74477.1"/>
    <property type="status" value="JOINED"/>
    <property type="molecule type" value="Genomic_DNA"/>
</dbReference>
<dbReference type="EMBL" id="M15355">
    <property type="protein sequence ID" value="AAA74477.1"/>
    <property type="status" value="JOINED"/>
    <property type="molecule type" value="Genomic_DNA"/>
</dbReference>
<dbReference type="EMBL" id="M15356">
    <property type="protein sequence ID" value="AAA74477.1"/>
    <property type="status" value="JOINED"/>
    <property type="molecule type" value="Genomic_DNA"/>
</dbReference>
<dbReference type="EMBL" id="M15357">
    <property type="protein sequence ID" value="AAA74477.1"/>
    <property type="status" value="JOINED"/>
    <property type="molecule type" value="Genomic_DNA"/>
</dbReference>
<dbReference type="PIR" id="A02235">
    <property type="entry name" value="HLRTAB"/>
</dbReference>
<dbReference type="SMR" id="P06341"/>
<dbReference type="FunCoup" id="P06341">
    <property type="interactions" value="68"/>
</dbReference>
<dbReference type="GlyCosmos" id="P06341">
    <property type="glycosylation" value="1 site, No reported glycans"/>
</dbReference>
<dbReference type="GlyGen" id="P06341">
    <property type="glycosylation" value="1 site"/>
</dbReference>
<dbReference type="PhosphoSitePlus" id="P06341"/>
<dbReference type="AGR" id="RGD:3467"/>
<dbReference type="RGD" id="3467">
    <property type="gene designation" value="RT1-B"/>
</dbReference>
<dbReference type="InParanoid" id="P06341"/>
<dbReference type="PhylomeDB" id="P06341"/>
<dbReference type="Proteomes" id="UP000002494">
    <property type="component" value="Unplaced"/>
</dbReference>
<dbReference type="GO" id="GO:0009986">
    <property type="term" value="C:cell surface"/>
    <property type="evidence" value="ECO:0007669"/>
    <property type="project" value="UniProtKB-ARBA"/>
</dbReference>
<dbReference type="GO" id="GO:0031902">
    <property type="term" value="C:late endosome membrane"/>
    <property type="evidence" value="ECO:0000318"/>
    <property type="project" value="GO_Central"/>
</dbReference>
<dbReference type="GO" id="GO:0005765">
    <property type="term" value="C:lysosomal membrane"/>
    <property type="evidence" value="ECO:0000318"/>
    <property type="project" value="GO_Central"/>
</dbReference>
<dbReference type="GO" id="GO:0042613">
    <property type="term" value="C:MHC class II protein complex"/>
    <property type="evidence" value="ECO:0000318"/>
    <property type="project" value="GO_Central"/>
</dbReference>
<dbReference type="GO" id="GO:0023026">
    <property type="term" value="F:MHC class II protein complex binding"/>
    <property type="evidence" value="ECO:0000318"/>
    <property type="project" value="GO_Central"/>
</dbReference>
<dbReference type="GO" id="GO:0042605">
    <property type="term" value="F:peptide antigen binding"/>
    <property type="evidence" value="ECO:0000318"/>
    <property type="project" value="GO_Central"/>
</dbReference>
<dbReference type="GO" id="GO:0002250">
    <property type="term" value="P:adaptive immune response"/>
    <property type="evidence" value="ECO:0007669"/>
    <property type="project" value="UniProtKB-KW"/>
</dbReference>
<dbReference type="GO" id="GO:0019886">
    <property type="term" value="P:antigen processing and presentation of exogenous peptide antigen via MHC class II"/>
    <property type="evidence" value="ECO:0000318"/>
    <property type="project" value="GO_Central"/>
</dbReference>
<dbReference type="GO" id="GO:0002503">
    <property type="term" value="P:peptide antigen assembly with MHC class II protein complex"/>
    <property type="evidence" value="ECO:0000318"/>
    <property type="project" value="GO_Central"/>
</dbReference>
<dbReference type="GO" id="GO:0050778">
    <property type="term" value="P:positive regulation of immune response"/>
    <property type="evidence" value="ECO:0000318"/>
    <property type="project" value="GO_Central"/>
</dbReference>
<dbReference type="GO" id="GO:0050870">
    <property type="term" value="P:positive regulation of T cell activation"/>
    <property type="evidence" value="ECO:0000318"/>
    <property type="project" value="GO_Central"/>
</dbReference>
<dbReference type="CDD" id="cd21001">
    <property type="entry name" value="IgC1_MHC_II_beta_HLA-DQ_I-A"/>
    <property type="match status" value="1"/>
</dbReference>
<dbReference type="FunFam" id="2.60.40.10:FF:000116">
    <property type="entry name" value="HLA class II histocompatibility antigen, DRB1-1 beta chain"/>
    <property type="match status" value="1"/>
</dbReference>
<dbReference type="FunFam" id="3.10.320.10:FF:000001">
    <property type="entry name" value="HLA class II histocompatibility antigen, DRB1-1 beta chain"/>
    <property type="match status" value="1"/>
</dbReference>
<dbReference type="Gene3D" id="3.10.320.10">
    <property type="entry name" value="Class II Histocompatibility Antigen, M Beta Chain, Chain B, domain 1"/>
    <property type="match status" value="1"/>
</dbReference>
<dbReference type="Gene3D" id="2.60.40.10">
    <property type="entry name" value="Immunoglobulins"/>
    <property type="match status" value="1"/>
</dbReference>
<dbReference type="InterPro" id="IPR007110">
    <property type="entry name" value="Ig-like_dom"/>
</dbReference>
<dbReference type="InterPro" id="IPR036179">
    <property type="entry name" value="Ig-like_dom_sf"/>
</dbReference>
<dbReference type="InterPro" id="IPR013783">
    <property type="entry name" value="Ig-like_fold"/>
</dbReference>
<dbReference type="InterPro" id="IPR003006">
    <property type="entry name" value="Ig/MHC_CS"/>
</dbReference>
<dbReference type="InterPro" id="IPR003597">
    <property type="entry name" value="Ig_C1-set"/>
</dbReference>
<dbReference type="InterPro" id="IPR050160">
    <property type="entry name" value="MHC/Immunoglobulin"/>
</dbReference>
<dbReference type="InterPro" id="IPR011162">
    <property type="entry name" value="MHC_I/II-like_Ag-recog"/>
</dbReference>
<dbReference type="InterPro" id="IPR014745">
    <property type="entry name" value="MHC_II_a/b_N"/>
</dbReference>
<dbReference type="InterPro" id="IPR000353">
    <property type="entry name" value="MHC_II_b_N"/>
</dbReference>
<dbReference type="PANTHER" id="PTHR19944:SF101">
    <property type="entry name" value="HLA CLASS II HISTOCOMPATIBILITY ANTIGEN, DQ BETA 1 CHAIN"/>
    <property type="match status" value="1"/>
</dbReference>
<dbReference type="PANTHER" id="PTHR19944">
    <property type="entry name" value="MHC CLASS II-RELATED"/>
    <property type="match status" value="1"/>
</dbReference>
<dbReference type="Pfam" id="PF07654">
    <property type="entry name" value="C1-set"/>
    <property type="match status" value="1"/>
</dbReference>
<dbReference type="Pfam" id="PF00969">
    <property type="entry name" value="MHC_II_beta"/>
    <property type="match status" value="1"/>
</dbReference>
<dbReference type="SMART" id="SM00407">
    <property type="entry name" value="IGc1"/>
    <property type="match status" value="1"/>
</dbReference>
<dbReference type="SMART" id="SM00921">
    <property type="entry name" value="MHC_II_beta"/>
    <property type="match status" value="1"/>
</dbReference>
<dbReference type="SUPFAM" id="SSF48726">
    <property type="entry name" value="Immunoglobulin"/>
    <property type="match status" value="1"/>
</dbReference>
<dbReference type="SUPFAM" id="SSF54452">
    <property type="entry name" value="MHC antigen-recognition domain"/>
    <property type="match status" value="1"/>
</dbReference>
<dbReference type="PROSITE" id="PS50835">
    <property type="entry name" value="IG_LIKE"/>
    <property type="match status" value="1"/>
</dbReference>
<dbReference type="PROSITE" id="PS00290">
    <property type="entry name" value="IG_MHC"/>
    <property type="match status" value="1"/>
</dbReference>
<comment type="function">
    <text>Involved in the presentation of foreign antigens to the immune system.</text>
</comment>
<comment type="subcellular location">
    <subcellularLocation>
        <location evidence="2">Membrane</location>
        <topology evidence="2">Single-pass type I membrane protein</topology>
    </subcellularLocation>
</comment>
<comment type="similarity">
    <text evidence="2">Belongs to the MHC class II family.</text>
</comment>
<protein>
    <recommendedName>
        <fullName>Rano class II histocompatibility antigen, A beta chain</fullName>
    </recommendedName>
    <alternativeName>
        <fullName>RT1 class II histocompatibility antigen, A beta chain</fullName>
    </alternativeName>
</protein>
<reference key="1">
    <citation type="journal article" date="1985" name="Immunogenetics">
        <title>DNA sequence analysis of a rat RT1 class II A beta gene.</title>
        <authorList>
            <person name="Eccles S.J."/>
            <person name="McMaster W.R."/>
        </authorList>
    </citation>
    <scope>NUCLEOTIDE SEQUENCE [GENOMIC DNA]</scope>
</reference>
<name>HB2A_RAT</name>
<proteinExistence type="inferred from homology"/>
<sequence length="233" mass="26827">DFVYQFKGLCYYTNGTQRIRSVDRRFYNQEEFLRYDSDVGEFRALTELGRSWADDWNSQKEILEQKRAEMDTVCRYNYEETEVPTSLRRLERPNVAISLSRTEALNHHNLLVCSVTDFYPAQIKVRWFRNGQEETTGVVSTQLIKNGDWTFQILVMLEMTPQRGDVYTCHVDHASLESPVTVEWRAQSESAQSKMLSGIGGLVLGVIFLGLGLFIRHKRQKGPQGPPPAGLLQ</sequence>
<feature type="chain" id="PRO_0000080755" description="Rano class II histocompatibility antigen, A beta chain">
    <location>
        <begin position="1" status="less than"/>
        <end position="233"/>
    </location>
</feature>
<feature type="topological domain" description="Extracellular" evidence="1">
    <location>
        <begin position="1" status="less than"/>
        <end position="194"/>
    </location>
</feature>
<feature type="transmembrane region" description="Helical" evidence="1">
    <location>
        <begin position="195"/>
        <end position="215"/>
    </location>
</feature>
<feature type="topological domain" description="Cytoplasmic" evidence="1">
    <location>
        <begin position="216"/>
        <end position="233"/>
    </location>
</feature>
<feature type="domain" description="Ig-like C1-type">
    <location>
        <begin position="93"/>
        <end position="181"/>
    </location>
</feature>
<feature type="region of interest" description="Beta-1">
    <location>
        <begin position="1" status="less than"/>
        <end position="80"/>
    </location>
</feature>
<feature type="region of interest" description="Beta-2">
    <location>
        <begin position="81"/>
        <end position="184"/>
    </location>
</feature>
<feature type="region of interest" description="Connecting peptide">
    <location>
        <begin position="185"/>
        <end position="194"/>
    </location>
</feature>
<feature type="glycosylation site" description="N-linked (GlcNAc...) asparagine" evidence="1">
    <location>
        <position position="14"/>
    </location>
</feature>
<feature type="non-terminal residue">
    <location>
        <position position="1"/>
    </location>
</feature>
<keyword id="KW-1064">Adaptive immunity</keyword>
<keyword id="KW-0325">Glycoprotein</keyword>
<keyword id="KW-0391">Immunity</keyword>
<keyword id="KW-0472">Membrane</keyword>
<keyword id="KW-0491">MHC II</keyword>
<keyword id="KW-1185">Reference proteome</keyword>
<keyword id="KW-0812">Transmembrane</keyword>
<keyword id="KW-1133">Transmembrane helix</keyword>
<organism>
    <name type="scientific">Rattus norvegicus</name>
    <name type="common">Rat</name>
    <dbReference type="NCBI Taxonomy" id="10116"/>
    <lineage>
        <taxon>Eukaryota</taxon>
        <taxon>Metazoa</taxon>
        <taxon>Chordata</taxon>
        <taxon>Craniata</taxon>
        <taxon>Vertebrata</taxon>
        <taxon>Euteleostomi</taxon>
        <taxon>Mammalia</taxon>
        <taxon>Eutheria</taxon>
        <taxon>Euarchontoglires</taxon>
        <taxon>Glires</taxon>
        <taxon>Rodentia</taxon>
        <taxon>Myomorpha</taxon>
        <taxon>Muroidea</taxon>
        <taxon>Muridae</taxon>
        <taxon>Murinae</taxon>
        <taxon>Rattus</taxon>
    </lineage>
</organism>
<evidence type="ECO:0000255" key="1"/>
<evidence type="ECO:0000305" key="2"/>